<reference key="1">
    <citation type="journal article" date="2004" name="Nature">
        <title>The DNA sequence and biology of human chromosome 19.</title>
        <authorList>
            <person name="Grimwood J."/>
            <person name="Gordon L.A."/>
            <person name="Olsen A.S."/>
            <person name="Terry A."/>
            <person name="Schmutz J."/>
            <person name="Lamerdin J.E."/>
            <person name="Hellsten U."/>
            <person name="Goodstein D."/>
            <person name="Couronne O."/>
            <person name="Tran-Gyamfi M."/>
            <person name="Aerts A."/>
            <person name="Altherr M."/>
            <person name="Ashworth L."/>
            <person name="Bajorek E."/>
            <person name="Black S."/>
            <person name="Branscomb E."/>
            <person name="Caenepeel S."/>
            <person name="Carrano A.V."/>
            <person name="Caoile C."/>
            <person name="Chan Y.M."/>
            <person name="Christensen M."/>
            <person name="Cleland C.A."/>
            <person name="Copeland A."/>
            <person name="Dalin E."/>
            <person name="Dehal P."/>
            <person name="Denys M."/>
            <person name="Detter J.C."/>
            <person name="Escobar J."/>
            <person name="Flowers D."/>
            <person name="Fotopulos D."/>
            <person name="Garcia C."/>
            <person name="Georgescu A.M."/>
            <person name="Glavina T."/>
            <person name="Gomez M."/>
            <person name="Gonzales E."/>
            <person name="Groza M."/>
            <person name="Hammon N."/>
            <person name="Hawkins T."/>
            <person name="Haydu L."/>
            <person name="Ho I."/>
            <person name="Huang W."/>
            <person name="Israni S."/>
            <person name="Jett J."/>
            <person name="Kadner K."/>
            <person name="Kimball H."/>
            <person name="Kobayashi A."/>
            <person name="Larionov V."/>
            <person name="Leem S.-H."/>
            <person name="Lopez F."/>
            <person name="Lou Y."/>
            <person name="Lowry S."/>
            <person name="Malfatti S."/>
            <person name="Martinez D."/>
            <person name="McCready P.M."/>
            <person name="Medina C."/>
            <person name="Morgan J."/>
            <person name="Nelson K."/>
            <person name="Nolan M."/>
            <person name="Ovcharenko I."/>
            <person name="Pitluck S."/>
            <person name="Pollard M."/>
            <person name="Popkie A.P."/>
            <person name="Predki P."/>
            <person name="Quan G."/>
            <person name="Ramirez L."/>
            <person name="Rash S."/>
            <person name="Retterer J."/>
            <person name="Rodriguez A."/>
            <person name="Rogers S."/>
            <person name="Salamov A."/>
            <person name="Salazar A."/>
            <person name="She X."/>
            <person name="Smith D."/>
            <person name="Slezak T."/>
            <person name="Solovyev V."/>
            <person name="Thayer N."/>
            <person name="Tice H."/>
            <person name="Tsai M."/>
            <person name="Ustaszewska A."/>
            <person name="Vo N."/>
            <person name="Wagner M."/>
            <person name="Wheeler J."/>
            <person name="Wu K."/>
            <person name="Xie G."/>
            <person name="Yang J."/>
            <person name="Dubchak I."/>
            <person name="Furey T.S."/>
            <person name="DeJong P."/>
            <person name="Dickson M."/>
            <person name="Gordon D."/>
            <person name="Eichler E.E."/>
            <person name="Pennacchio L.A."/>
            <person name="Richardson P."/>
            <person name="Stubbs L."/>
            <person name="Rokhsar D.S."/>
            <person name="Myers R.M."/>
            <person name="Rubin E.M."/>
            <person name="Lucas S.M."/>
        </authorList>
    </citation>
    <scope>NUCLEOTIDE SEQUENCE [LARGE SCALE GENOMIC DNA]</scope>
</reference>
<keyword id="KW-1015">Disulfide bond</keyword>
<keyword id="KW-0393">Immunoglobulin domain</keyword>
<keyword id="KW-0472">Membrane</keyword>
<keyword id="KW-1267">Proteomics identification</keyword>
<keyword id="KW-1185">Reference proteome</keyword>
<keyword id="KW-0732">Signal</keyword>
<keyword id="KW-0812">Transmembrane</keyword>
<keyword id="KW-1133">Transmembrane helix</keyword>
<sequence>MEQRNRLGALGYLPPLLLHALLLFVADAAFTEVPKDVTVREGDDIEMPCAFRASGATSYSLEIQWWYLKEPPRELLHELALSVPGARSKVTNKDATKISTVRVQGNDISHRLRLSAVRLQDEGVYECRVSDYSDDDTQEHKAQAMLRVLSRFAPPNMQAAEAVSHIQSSGPRRHGPASAANANNAGAASRTTSEPGRGDKSPPPGSPPAAIDPAVPEAAAASAAHTPTTTVAAAAAASSASPPSGQAVLLRQRHGSGTGRSYTTDPLLSLLLLALHKFLRLLLGH</sequence>
<feature type="signal peptide" evidence="1">
    <location>
        <begin position="1"/>
        <end position="28"/>
    </location>
</feature>
<feature type="chain" id="PRO_0000319943" description="V-set and transmembrane domain-containing protein 2B">
    <location>
        <begin position="29"/>
        <end position="285"/>
    </location>
</feature>
<feature type="topological domain" description="Extracellular" evidence="1">
    <location>
        <begin position="29"/>
        <end position="263"/>
    </location>
</feature>
<feature type="transmembrane region" description="Helical" evidence="1">
    <location>
        <begin position="264"/>
        <end position="284"/>
    </location>
</feature>
<feature type="topological domain" description="Cytoplasmic" evidence="1">
    <location>
        <position position="285"/>
    </location>
</feature>
<feature type="domain" description="Ig-like V-type">
    <location>
        <begin position="29"/>
        <end position="143"/>
    </location>
</feature>
<feature type="region of interest" description="Disordered" evidence="3">
    <location>
        <begin position="161"/>
        <end position="226"/>
    </location>
</feature>
<feature type="compositionally biased region" description="Low complexity" evidence="3">
    <location>
        <begin position="177"/>
        <end position="189"/>
    </location>
</feature>
<feature type="compositionally biased region" description="Low complexity" evidence="3">
    <location>
        <begin position="208"/>
        <end position="226"/>
    </location>
</feature>
<feature type="disulfide bond" evidence="2">
    <location>
        <begin position="49"/>
        <end position="127"/>
    </location>
</feature>
<comment type="subcellular location">
    <subcellularLocation>
        <location evidence="4">Membrane</location>
        <topology evidence="4">Single-pass type I membrane protein</topology>
    </subcellularLocation>
</comment>
<gene>
    <name type="primary">VSTM2B</name>
</gene>
<dbReference type="EMBL" id="AC011474">
    <property type="status" value="NOT_ANNOTATED_CDS"/>
    <property type="molecule type" value="Genomic_DNA"/>
</dbReference>
<dbReference type="CCDS" id="CCDS46034.1"/>
<dbReference type="RefSeq" id="NP_001139811.1">
    <property type="nucleotide sequence ID" value="NM_001146339.2"/>
</dbReference>
<dbReference type="RefSeq" id="XP_011525204.1">
    <property type="nucleotide sequence ID" value="XM_011526902.3"/>
</dbReference>
<dbReference type="RefSeq" id="XP_054176812.1">
    <property type="nucleotide sequence ID" value="XM_054320837.1"/>
</dbReference>
<dbReference type="SMR" id="A6NLU5"/>
<dbReference type="BioGRID" id="131201">
    <property type="interactions" value="1"/>
</dbReference>
<dbReference type="FunCoup" id="A6NLU5">
    <property type="interactions" value="387"/>
</dbReference>
<dbReference type="IntAct" id="A6NLU5">
    <property type="interactions" value="1"/>
</dbReference>
<dbReference type="STRING" id="9606.ENSP00000335038"/>
<dbReference type="GlyGen" id="A6NLU5">
    <property type="glycosylation" value="1 site, 1 O-linked glycan (1 site)"/>
</dbReference>
<dbReference type="iPTMnet" id="A6NLU5"/>
<dbReference type="PhosphoSitePlus" id="A6NLU5"/>
<dbReference type="BioMuta" id="VSTM2B"/>
<dbReference type="MassIVE" id="A6NLU5"/>
<dbReference type="PaxDb" id="9606-ENSP00000335038"/>
<dbReference type="PeptideAtlas" id="A6NLU5"/>
<dbReference type="ProteomicsDB" id="1493"/>
<dbReference type="Antibodypedia" id="76668">
    <property type="antibodies" value="1 antibodies from 1 providers"/>
</dbReference>
<dbReference type="DNASU" id="342865"/>
<dbReference type="Ensembl" id="ENST00000335523.8">
    <property type="protein sequence ID" value="ENSP00000335038.6"/>
    <property type="gene ID" value="ENSG00000187135.8"/>
</dbReference>
<dbReference type="GeneID" id="342865"/>
<dbReference type="KEGG" id="hsa:342865"/>
<dbReference type="MANE-Select" id="ENST00000335523.8">
    <property type="protein sequence ID" value="ENSP00000335038.6"/>
    <property type="RefSeq nucleotide sequence ID" value="NM_001146339.2"/>
    <property type="RefSeq protein sequence ID" value="NP_001139811.1"/>
</dbReference>
<dbReference type="UCSC" id="uc010xrl.2">
    <property type="organism name" value="human"/>
</dbReference>
<dbReference type="AGR" id="HGNC:33595"/>
<dbReference type="CTD" id="342865"/>
<dbReference type="GeneCards" id="VSTM2B"/>
<dbReference type="HGNC" id="HGNC:33595">
    <property type="gene designation" value="VSTM2B"/>
</dbReference>
<dbReference type="HPA" id="ENSG00000187135">
    <property type="expression patterns" value="Tissue enriched (brain)"/>
</dbReference>
<dbReference type="neXtProt" id="NX_A6NLU5"/>
<dbReference type="OpenTargets" id="ENSG00000187135"/>
<dbReference type="PharmGKB" id="PA162408890"/>
<dbReference type="VEuPathDB" id="HostDB:ENSG00000187135"/>
<dbReference type="eggNOG" id="ENOG502QSS5">
    <property type="taxonomic scope" value="Eukaryota"/>
</dbReference>
<dbReference type="GeneTree" id="ENSGT00940000161356"/>
<dbReference type="HOGENOM" id="CLU_081009_0_0_1"/>
<dbReference type="InParanoid" id="A6NLU5"/>
<dbReference type="OMA" id="YQCRVSD"/>
<dbReference type="OrthoDB" id="9942060at2759"/>
<dbReference type="PAN-GO" id="A6NLU5">
    <property type="GO annotations" value="1 GO annotation based on evolutionary models"/>
</dbReference>
<dbReference type="PhylomeDB" id="A6NLU5"/>
<dbReference type="TreeFam" id="TF331739"/>
<dbReference type="PathwayCommons" id="A6NLU5"/>
<dbReference type="SignaLink" id="A6NLU5"/>
<dbReference type="BioGRID-ORCS" id="342865">
    <property type="hits" value="13 hits in 1134 CRISPR screens"/>
</dbReference>
<dbReference type="GenomeRNAi" id="342865"/>
<dbReference type="Pharos" id="A6NLU5">
    <property type="development level" value="Tdark"/>
</dbReference>
<dbReference type="PRO" id="PR:A6NLU5"/>
<dbReference type="Proteomes" id="UP000005640">
    <property type="component" value="Chromosome 19"/>
</dbReference>
<dbReference type="RNAct" id="A6NLU5">
    <property type="molecule type" value="protein"/>
</dbReference>
<dbReference type="Bgee" id="ENSG00000187135">
    <property type="expression patterns" value="Expressed in Brodmann (1909) area 9 and 53 other cell types or tissues"/>
</dbReference>
<dbReference type="GO" id="GO:0016020">
    <property type="term" value="C:membrane"/>
    <property type="evidence" value="ECO:0000318"/>
    <property type="project" value="GO_Central"/>
</dbReference>
<dbReference type="FunFam" id="2.60.40.10:FF:000804">
    <property type="entry name" value="V-set and transmembrane domain containing 2B"/>
    <property type="match status" value="1"/>
</dbReference>
<dbReference type="Gene3D" id="2.60.40.10">
    <property type="entry name" value="Immunoglobulins"/>
    <property type="match status" value="1"/>
</dbReference>
<dbReference type="InterPro" id="IPR007110">
    <property type="entry name" value="Ig-like_dom"/>
</dbReference>
<dbReference type="InterPro" id="IPR036179">
    <property type="entry name" value="Ig-like_dom_sf"/>
</dbReference>
<dbReference type="InterPro" id="IPR013783">
    <property type="entry name" value="Ig-like_fold"/>
</dbReference>
<dbReference type="InterPro" id="IPR003599">
    <property type="entry name" value="Ig_sub"/>
</dbReference>
<dbReference type="InterPro" id="IPR013106">
    <property type="entry name" value="Ig_V-set"/>
</dbReference>
<dbReference type="InterPro" id="IPR051102">
    <property type="entry name" value="IgSF_V-set/TM_domain"/>
</dbReference>
<dbReference type="PANTHER" id="PTHR12207">
    <property type="entry name" value="V-SET AND TRANSMEMBRANE DOMAIN-CONTAINING PROTEIN"/>
    <property type="match status" value="1"/>
</dbReference>
<dbReference type="PANTHER" id="PTHR12207:SF27">
    <property type="entry name" value="V-SET AND TRANSMEMBRANE DOMAIN-CONTAINING PROTEIN 2B"/>
    <property type="match status" value="1"/>
</dbReference>
<dbReference type="Pfam" id="PF07686">
    <property type="entry name" value="V-set"/>
    <property type="match status" value="1"/>
</dbReference>
<dbReference type="SMART" id="SM00409">
    <property type="entry name" value="IG"/>
    <property type="match status" value="1"/>
</dbReference>
<dbReference type="SUPFAM" id="SSF48726">
    <property type="entry name" value="Immunoglobulin"/>
    <property type="match status" value="1"/>
</dbReference>
<dbReference type="PROSITE" id="PS50835">
    <property type="entry name" value="IG_LIKE"/>
    <property type="match status" value="1"/>
</dbReference>
<proteinExistence type="evidence at protein level"/>
<name>VTM2B_HUMAN</name>
<accession>A6NLU5</accession>
<organism>
    <name type="scientific">Homo sapiens</name>
    <name type="common">Human</name>
    <dbReference type="NCBI Taxonomy" id="9606"/>
    <lineage>
        <taxon>Eukaryota</taxon>
        <taxon>Metazoa</taxon>
        <taxon>Chordata</taxon>
        <taxon>Craniata</taxon>
        <taxon>Vertebrata</taxon>
        <taxon>Euteleostomi</taxon>
        <taxon>Mammalia</taxon>
        <taxon>Eutheria</taxon>
        <taxon>Euarchontoglires</taxon>
        <taxon>Primates</taxon>
        <taxon>Haplorrhini</taxon>
        <taxon>Catarrhini</taxon>
        <taxon>Hominidae</taxon>
        <taxon>Homo</taxon>
    </lineage>
</organism>
<protein>
    <recommendedName>
        <fullName>V-set and transmembrane domain-containing protein 2B</fullName>
    </recommendedName>
</protein>
<evidence type="ECO:0000255" key="1"/>
<evidence type="ECO:0000255" key="2">
    <source>
        <dbReference type="PROSITE-ProRule" id="PRU00114"/>
    </source>
</evidence>
<evidence type="ECO:0000256" key="3">
    <source>
        <dbReference type="SAM" id="MobiDB-lite"/>
    </source>
</evidence>
<evidence type="ECO:0000305" key="4"/>